<proteinExistence type="evidence at protein level"/>
<accession>Q2RB59</accession>
<accession>A0A0P0XY98</accession>
<accession>A3C836</accession>
<dbReference type="EMBL" id="DP000010">
    <property type="protein sequence ID" value="ABA91267.1"/>
    <property type="molecule type" value="Genomic_DNA"/>
</dbReference>
<dbReference type="EMBL" id="AP008217">
    <property type="protein sequence ID" value="BAF27462.1"/>
    <property type="molecule type" value="Genomic_DNA"/>
</dbReference>
<dbReference type="EMBL" id="AP014967">
    <property type="protein sequence ID" value="BAT12470.1"/>
    <property type="molecule type" value="Genomic_DNA"/>
</dbReference>
<dbReference type="EMBL" id="CM000148">
    <property type="protein sequence ID" value="EAZ17249.1"/>
    <property type="status" value="ALT_INIT"/>
    <property type="molecule type" value="Genomic_DNA"/>
</dbReference>
<dbReference type="RefSeq" id="XP_015615402.1">
    <property type="nucleotide sequence ID" value="XM_015759916.1"/>
</dbReference>
<dbReference type="SMR" id="Q2RB59"/>
<dbReference type="BioGRID" id="818675">
    <property type="interactions" value="2"/>
</dbReference>
<dbReference type="FunCoup" id="Q2RB59">
    <property type="interactions" value="1355"/>
</dbReference>
<dbReference type="STRING" id="39947.Q2RB59"/>
<dbReference type="PaxDb" id="39947-Q2RB59"/>
<dbReference type="EnsemblPlants" id="Os11t0124300-01">
    <property type="protein sequence ID" value="Os11t0124300-01"/>
    <property type="gene ID" value="Os11g0124300"/>
</dbReference>
<dbReference type="Gramene" id="Os11t0124300-01">
    <property type="protein sequence ID" value="Os11t0124300-01"/>
    <property type="gene ID" value="Os11g0124300"/>
</dbReference>
<dbReference type="KEGG" id="dosa:Os11g0124300"/>
<dbReference type="eggNOG" id="ENOG502QTMY">
    <property type="taxonomic scope" value="Eukaryota"/>
</dbReference>
<dbReference type="HOGENOM" id="CLU_011924_7_2_1"/>
<dbReference type="InParanoid" id="Q2RB59"/>
<dbReference type="OMA" id="NNDSTAW"/>
<dbReference type="OrthoDB" id="757063at2759"/>
<dbReference type="Proteomes" id="UP000000763">
    <property type="component" value="Chromosome 11"/>
</dbReference>
<dbReference type="Proteomes" id="UP000007752">
    <property type="component" value="Chromosome 11"/>
</dbReference>
<dbReference type="Proteomes" id="UP000059680">
    <property type="component" value="Chromosome 11"/>
</dbReference>
<dbReference type="GO" id="GO:0005634">
    <property type="term" value="C:nucleus"/>
    <property type="evidence" value="ECO:0000318"/>
    <property type="project" value="GO_Central"/>
</dbReference>
<dbReference type="GO" id="GO:0003700">
    <property type="term" value="F:DNA-binding transcription factor activity"/>
    <property type="evidence" value="ECO:0000318"/>
    <property type="project" value="GO_Central"/>
</dbReference>
<dbReference type="GO" id="GO:0043565">
    <property type="term" value="F:sequence-specific DNA binding"/>
    <property type="evidence" value="ECO:0000318"/>
    <property type="project" value="GO_Central"/>
</dbReference>
<dbReference type="GO" id="GO:0008356">
    <property type="term" value="P:asymmetric cell division"/>
    <property type="evidence" value="ECO:0000318"/>
    <property type="project" value="GO_Central"/>
</dbReference>
<dbReference type="GO" id="GO:0090610">
    <property type="term" value="P:bundle sheath cell fate specification"/>
    <property type="evidence" value="ECO:0000318"/>
    <property type="project" value="GO_Central"/>
</dbReference>
<dbReference type="GO" id="GO:0009630">
    <property type="term" value="P:gravitropism"/>
    <property type="evidence" value="ECO:0000318"/>
    <property type="project" value="GO_Central"/>
</dbReference>
<dbReference type="GO" id="GO:0048366">
    <property type="term" value="P:leaf development"/>
    <property type="evidence" value="ECO:0000318"/>
    <property type="project" value="GO_Central"/>
</dbReference>
<dbReference type="GO" id="GO:0051457">
    <property type="term" value="P:maintenance of protein location in nucleus"/>
    <property type="evidence" value="ECO:0000318"/>
    <property type="project" value="GO_Central"/>
</dbReference>
<dbReference type="GO" id="GO:0009956">
    <property type="term" value="P:radial pattern formation"/>
    <property type="evidence" value="ECO:0000318"/>
    <property type="project" value="GO_Central"/>
</dbReference>
<dbReference type="GO" id="GO:0006355">
    <property type="term" value="P:regulation of DNA-templated transcription"/>
    <property type="evidence" value="ECO:0000318"/>
    <property type="project" value="GO_Central"/>
</dbReference>
<dbReference type="InterPro" id="IPR005202">
    <property type="entry name" value="TF_GRAS"/>
</dbReference>
<dbReference type="PANTHER" id="PTHR31636">
    <property type="entry name" value="OSJNBA0084A10.13 PROTEIN-RELATED"/>
    <property type="match status" value="1"/>
</dbReference>
<dbReference type="Pfam" id="PF03514">
    <property type="entry name" value="GRAS"/>
    <property type="match status" value="1"/>
</dbReference>
<dbReference type="PROSITE" id="PS50985">
    <property type="entry name" value="GRAS"/>
    <property type="match status" value="1"/>
</dbReference>
<reference key="1">
    <citation type="journal article" date="2005" name="BMC Biol.">
        <title>The sequence of rice chromosomes 11 and 12, rich in disease resistance genes and recent gene duplications.</title>
        <authorList>
            <consortium name="The rice chromosomes 11 and 12 sequencing consortia"/>
        </authorList>
    </citation>
    <scope>NUCLEOTIDE SEQUENCE [LARGE SCALE GENOMIC DNA]</scope>
    <source>
        <strain>cv. Nipponbare</strain>
    </source>
</reference>
<reference key="2">
    <citation type="journal article" date="2005" name="Nature">
        <title>The map-based sequence of the rice genome.</title>
        <authorList>
            <consortium name="International rice genome sequencing project (IRGSP)"/>
        </authorList>
    </citation>
    <scope>NUCLEOTIDE SEQUENCE [LARGE SCALE GENOMIC DNA]</scope>
    <source>
        <strain>cv. Nipponbare</strain>
    </source>
</reference>
<reference key="3">
    <citation type="journal article" date="2008" name="Nucleic Acids Res.">
        <title>The rice annotation project database (RAP-DB): 2008 update.</title>
        <authorList>
            <consortium name="The rice annotation project (RAP)"/>
        </authorList>
    </citation>
    <scope>GENOME REANNOTATION</scope>
    <source>
        <strain>cv. Nipponbare</strain>
    </source>
</reference>
<reference key="4">
    <citation type="journal article" date="2013" name="Rice">
        <title>Improvement of the Oryza sativa Nipponbare reference genome using next generation sequence and optical map data.</title>
        <authorList>
            <person name="Kawahara Y."/>
            <person name="de la Bastide M."/>
            <person name="Hamilton J.P."/>
            <person name="Kanamori H."/>
            <person name="McCombie W.R."/>
            <person name="Ouyang S."/>
            <person name="Schwartz D.C."/>
            <person name="Tanaka T."/>
            <person name="Wu J."/>
            <person name="Zhou S."/>
            <person name="Childs K.L."/>
            <person name="Davidson R.M."/>
            <person name="Lin H."/>
            <person name="Quesada-Ocampo L."/>
            <person name="Vaillancourt B."/>
            <person name="Sakai H."/>
            <person name="Lee S.S."/>
            <person name="Kim J."/>
            <person name="Numa H."/>
            <person name="Itoh T."/>
            <person name="Buell C.R."/>
            <person name="Matsumoto T."/>
        </authorList>
    </citation>
    <scope>GENOME REANNOTATION</scope>
    <source>
        <strain>cv. Nipponbare</strain>
    </source>
</reference>
<reference key="5">
    <citation type="journal article" date="2005" name="PLoS Biol.">
        <title>The genomes of Oryza sativa: a history of duplications.</title>
        <authorList>
            <person name="Yu J."/>
            <person name="Wang J."/>
            <person name="Lin W."/>
            <person name="Li S."/>
            <person name="Li H."/>
            <person name="Zhou J."/>
            <person name="Ni P."/>
            <person name="Dong W."/>
            <person name="Hu S."/>
            <person name="Zeng C."/>
            <person name="Zhang J."/>
            <person name="Zhang Y."/>
            <person name="Li R."/>
            <person name="Xu Z."/>
            <person name="Li S."/>
            <person name="Li X."/>
            <person name="Zheng H."/>
            <person name="Cong L."/>
            <person name="Lin L."/>
            <person name="Yin J."/>
            <person name="Geng J."/>
            <person name="Li G."/>
            <person name="Shi J."/>
            <person name="Liu J."/>
            <person name="Lv H."/>
            <person name="Li J."/>
            <person name="Wang J."/>
            <person name="Deng Y."/>
            <person name="Ran L."/>
            <person name="Shi X."/>
            <person name="Wang X."/>
            <person name="Wu Q."/>
            <person name="Li C."/>
            <person name="Ren X."/>
            <person name="Wang J."/>
            <person name="Wang X."/>
            <person name="Li D."/>
            <person name="Liu D."/>
            <person name="Zhang X."/>
            <person name="Ji Z."/>
            <person name="Zhao W."/>
            <person name="Sun Y."/>
            <person name="Zhang Z."/>
            <person name="Bao J."/>
            <person name="Han Y."/>
            <person name="Dong L."/>
            <person name="Ji J."/>
            <person name="Chen P."/>
            <person name="Wu S."/>
            <person name="Liu J."/>
            <person name="Xiao Y."/>
            <person name="Bu D."/>
            <person name="Tan J."/>
            <person name="Yang L."/>
            <person name="Ye C."/>
            <person name="Zhang J."/>
            <person name="Xu J."/>
            <person name="Zhou Y."/>
            <person name="Yu Y."/>
            <person name="Zhang B."/>
            <person name="Zhuang S."/>
            <person name="Wei H."/>
            <person name="Liu B."/>
            <person name="Lei M."/>
            <person name="Yu H."/>
            <person name="Li Y."/>
            <person name="Xu H."/>
            <person name="Wei S."/>
            <person name="He X."/>
            <person name="Fang L."/>
            <person name="Zhang Z."/>
            <person name="Zhang Y."/>
            <person name="Huang X."/>
            <person name="Su Z."/>
            <person name="Tong W."/>
            <person name="Li J."/>
            <person name="Tong Z."/>
            <person name="Li S."/>
            <person name="Ye J."/>
            <person name="Wang L."/>
            <person name="Fang L."/>
            <person name="Lei T."/>
            <person name="Chen C.-S."/>
            <person name="Chen H.-C."/>
            <person name="Xu Z."/>
            <person name="Li H."/>
            <person name="Huang H."/>
            <person name="Zhang F."/>
            <person name="Xu H."/>
            <person name="Li N."/>
            <person name="Zhao C."/>
            <person name="Li S."/>
            <person name="Dong L."/>
            <person name="Huang Y."/>
            <person name="Li L."/>
            <person name="Xi Y."/>
            <person name="Qi Q."/>
            <person name="Li W."/>
            <person name="Zhang B."/>
            <person name="Hu W."/>
            <person name="Zhang Y."/>
            <person name="Tian X."/>
            <person name="Jiao Y."/>
            <person name="Liang X."/>
            <person name="Jin J."/>
            <person name="Gao L."/>
            <person name="Zheng W."/>
            <person name="Hao B."/>
            <person name="Liu S.-M."/>
            <person name="Wang W."/>
            <person name="Yuan L."/>
            <person name="Cao M."/>
            <person name="McDermott J."/>
            <person name="Samudrala R."/>
            <person name="Wang J."/>
            <person name="Wong G.K.-S."/>
            <person name="Yang H."/>
        </authorList>
    </citation>
    <scope>NUCLEOTIDE SEQUENCE [LARGE SCALE GENOMIC DNA]</scope>
    <source>
        <strain>cv. Nipponbare</strain>
    </source>
</reference>
<reference key="6">
    <citation type="journal article" date="2007" name="Science">
        <title>An evolutionarily conserved mechanism delimiting SHR movement defines a single layer of endodermis in plants.</title>
        <authorList>
            <person name="Cui H."/>
            <person name="Levesque M.P."/>
            <person name="Vernoux T."/>
            <person name="Jung J.W."/>
            <person name="Paquette A.J."/>
            <person name="Gallagher K.L."/>
            <person name="Wang J.Y."/>
            <person name="Blilou I."/>
            <person name="Scheres B."/>
            <person name="Benfey P.N."/>
        </authorList>
    </citation>
    <scope>FUNCTION</scope>
    <scope>TISSUE SPECIFICITY</scope>
    <scope>INTERACTION WITH SHR1</scope>
</reference>
<name>SCR1_ORYSJ</name>
<keyword id="KW-0175">Coiled coil</keyword>
<keyword id="KW-0217">Developmental protein</keyword>
<keyword id="KW-0539">Nucleus</keyword>
<keyword id="KW-1185">Reference proteome</keyword>
<keyword id="KW-0804">Transcription</keyword>
<keyword id="KW-0805">Transcription regulation</keyword>
<protein>
    <recommendedName>
        <fullName>Protein SCARECROW 1</fullName>
    </recommendedName>
    <alternativeName>
        <fullName>OsSCR1</fullName>
    </alternativeName>
</protein>
<evidence type="ECO:0000250" key="1"/>
<evidence type="ECO:0000255" key="2"/>
<evidence type="ECO:0000255" key="3">
    <source>
        <dbReference type="PROSITE-ProRule" id="PRU01191"/>
    </source>
</evidence>
<evidence type="ECO:0000256" key="4">
    <source>
        <dbReference type="SAM" id="MobiDB-lite"/>
    </source>
</evidence>
<evidence type="ECO:0000269" key="5">
    <source>
    </source>
</evidence>
<evidence type="ECO:0000305" key="6"/>
<organism>
    <name type="scientific">Oryza sativa subsp. japonica</name>
    <name type="common">Rice</name>
    <dbReference type="NCBI Taxonomy" id="39947"/>
    <lineage>
        <taxon>Eukaryota</taxon>
        <taxon>Viridiplantae</taxon>
        <taxon>Streptophyta</taxon>
        <taxon>Embryophyta</taxon>
        <taxon>Tracheophyta</taxon>
        <taxon>Spermatophyta</taxon>
        <taxon>Magnoliopsida</taxon>
        <taxon>Liliopsida</taxon>
        <taxon>Poales</taxon>
        <taxon>Poaceae</taxon>
        <taxon>BOP clade</taxon>
        <taxon>Oryzoideae</taxon>
        <taxon>Oryzeae</taxon>
        <taxon>Oryzinae</taxon>
        <taxon>Oryza</taxon>
        <taxon>Oryza sativa</taxon>
    </lineage>
</organism>
<comment type="function">
    <text evidence="1 5">Transcription factor required for quiescent center cells specification and maintenance of surrounding stem cells, and for the asymmetric cell division involved in radial pattern formation in roots. Essential for cell division but not differentiation of the ground tissue. Regulates the radial organization of the shoot axial organs. Restricts SHR movment and sequesters it into the nucleus of the endodermis (By similarity).</text>
</comment>
<comment type="subunit">
    <text evidence="5">Interacts with SHR1, but not with SHR2.</text>
</comment>
<comment type="subcellular location">
    <subcellularLocation>
        <location evidence="1">Nucleus</location>
    </subcellularLocation>
</comment>
<comment type="tissue specificity">
    <text evidence="5">Expressed in the initial daughter cell before its asymmetric division and remains expressed in the endodermal cell layer after the division.</text>
</comment>
<comment type="similarity">
    <text evidence="6">Belongs to the GRAS family.</text>
</comment>
<comment type="sequence caution" evidence="6">
    <conflict type="erroneous initiation">
        <sequence resource="EMBL-CDS" id="EAZ17249"/>
    </conflict>
</comment>
<feature type="chain" id="PRO_0000329417" description="Protein SCARECROW 1">
    <location>
        <begin position="1"/>
        <end position="651"/>
    </location>
</feature>
<feature type="domain" description="GRAS" evidence="3">
    <location>
        <begin position="274"/>
        <end position="644"/>
    </location>
</feature>
<feature type="region of interest" description="Disordered" evidence="4">
    <location>
        <begin position="1"/>
        <end position="33"/>
    </location>
</feature>
<feature type="region of interest" description="Disordered" evidence="4">
    <location>
        <begin position="188"/>
        <end position="277"/>
    </location>
</feature>
<feature type="region of interest" description="Leucine repeat I (LRI)" evidence="3">
    <location>
        <begin position="281"/>
        <end position="345"/>
    </location>
</feature>
<feature type="region of interest" description="VHIID" evidence="3">
    <location>
        <begin position="364"/>
        <end position="429"/>
    </location>
</feature>
<feature type="region of interest" description="Leucine repeat II (LRII)" evidence="3">
    <location>
        <begin position="439"/>
        <end position="471"/>
    </location>
</feature>
<feature type="region of interest" description="PFYRE" evidence="3">
    <location>
        <begin position="480"/>
        <end position="567"/>
    </location>
</feature>
<feature type="region of interest" description="SAW" evidence="3">
    <location>
        <begin position="570"/>
        <end position="644"/>
    </location>
</feature>
<feature type="coiled-coil region" evidence="2">
    <location>
        <begin position="253"/>
        <end position="280"/>
    </location>
</feature>
<feature type="short sequence motif" description="LxCxE motif" evidence="3">
    <location>
        <begin position="288"/>
        <end position="292"/>
    </location>
</feature>
<feature type="short sequence motif" description="VHIID" evidence="3">
    <location>
        <begin position="395"/>
        <end position="399"/>
    </location>
</feature>
<feature type="compositionally biased region" description="Pro residues" evidence="4">
    <location>
        <begin position="190"/>
        <end position="228"/>
    </location>
</feature>
<feature type="compositionally biased region" description="Low complexity" evidence="4">
    <location>
        <begin position="254"/>
        <end position="263"/>
    </location>
</feature>
<feature type="compositionally biased region" description="Basic and acidic residues" evidence="4">
    <location>
        <begin position="264"/>
        <end position="277"/>
    </location>
</feature>
<gene>
    <name type="primary">SCR1</name>
    <name type="ordered locus">Os11g0124300</name>
    <name type="ordered locus">LOC_Os11g03110</name>
    <name type="ORF">OsJ_031458</name>
</gene>
<sequence>MGSSSLLLFPSSSSSATHSSYSPSSSSHAITSLLPPLPSDHHLLLYLDHQEQHHLAAAMVRKRPASDMDLPPPRRHVTGDLSDVTAAAAPSSASAQLPALPTQLPAFHHTDMDLAAPAPPPPQQQVAAGEGGPPSTAWVDGIIRDIIASSGAAVSVAQLIHNVREIIRPCNPDLASILELRLRSLLTSDPAPPPPPPPSHPALLPPDATAPPPPPTSVAALPPPPPPQPDKRRREPQCQEQEPNQPQSPKPPTAEETAAAAAAAKERKEEQRRKQRDEEGLHLLTLLLQCAESVNADNLDEAHRALLEIAELATPFGTSTQRVAAYFAEAMSARLVSSCLGLYAPLPNPSPAAARLHGRVAAAFQVFNGISPFVKFSHFTANQAIQEAFEREERVHIIDLDIMQGLQWPGLFHILASRPGGPPRVRLTGLGASMEALEATGKRLSDFADTLGLPFEFCPVADKAGNLDPEKLGVTRREAVAVHWLRHSLYDVTGSDSNTLWLIQRLAPKVVTMVEQDLSHSGSFLARFVEAIHYYSALFDSLDASYSEDSPERHVVEQQLLSREIRNVLAVGGPARTGDVKFGSWREKLAQSGFRVSSLAGSAAAQAVLLLGMFPSDGYTLIEENGALKLGWKDLCLLTASAWRPIQASGR</sequence>